<gene>
    <name evidence="1" type="primary">pyrG</name>
    <name type="ordered locus">SeSA_A3111</name>
</gene>
<reference key="1">
    <citation type="journal article" date="2011" name="J. Bacteriol.">
        <title>Comparative genomics of 28 Salmonella enterica isolates: evidence for CRISPR-mediated adaptive sublineage evolution.</title>
        <authorList>
            <person name="Fricke W.F."/>
            <person name="Mammel M.K."/>
            <person name="McDermott P.F."/>
            <person name="Tartera C."/>
            <person name="White D.G."/>
            <person name="Leclerc J.E."/>
            <person name="Ravel J."/>
            <person name="Cebula T.A."/>
        </authorList>
    </citation>
    <scope>NUCLEOTIDE SEQUENCE [LARGE SCALE GENOMIC DNA]</scope>
    <source>
        <strain>CVM19633</strain>
    </source>
</reference>
<keyword id="KW-0067">ATP-binding</keyword>
<keyword id="KW-0315">Glutamine amidotransferase</keyword>
<keyword id="KW-0436">Ligase</keyword>
<keyword id="KW-0460">Magnesium</keyword>
<keyword id="KW-0479">Metal-binding</keyword>
<keyword id="KW-0547">Nucleotide-binding</keyword>
<keyword id="KW-0665">Pyrimidine biosynthesis</keyword>
<organism>
    <name type="scientific">Salmonella schwarzengrund (strain CVM19633)</name>
    <dbReference type="NCBI Taxonomy" id="439843"/>
    <lineage>
        <taxon>Bacteria</taxon>
        <taxon>Pseudomonadati</taxon>
        <taxon>Pseudomonadota</taxon>
        <taxon>Gammaproteobacteria</taxon>
        <taxon>Enterobacterales</taxon>
        <taxon>Enterobacteriaceae</taxon>
        <taxon>Salmonella</taxon>
    </lineage>
</organism>
<accession>B4TTY6</accession>
<evidence type="ECO:0000255" key="1">
    <source>
        <dbReference type="HAMAP-Rule" id="MF_01227"/>
    </source>
</evidence>
<name>PYRG_SALSV</name>
<protein>
    <recommendedName>
        <fullName evidence="1">CTP synthase</fullName>
        <ecNumber evidence="1">6.3.4.2</ecNumber>
    </recommendedName>
    <alternativeName>
        <fullName evidence="1">Cytidine 5'-triphosphate synthase</fullName>
    </alternativeName>
    <alternativeName>
        <fullName evidence="1">Cytidine triphosphate synthetase</fullName>
        <shortName evidence="1">CTP synthetase</shortName>
        <shortName evidence="1">CTPS</shortName>
    </alternativeName>
    <alternativeName>
        <fullName evidence="1">UTP--ammonia ligase</fullName>
    </alternativeName>
</protein>
<proteinExistence type="inferred from homology"/>
<sequence>MTTNYIFVTGGVVSSLGKGIAAASLAAILEARGLNVTIMKLDPYINVDPGTMSPIQHGEVFVTEDGAETDLDLGHYERFIRTKMSRRNNFTTGRIYSDVLRKERRGDYLGATVQVIPHITNAIKERVLEGGEGHDVVLVEIGGTVGDIESLPFLEAIRQLAVDIGREHALFMHLTLVPYLAAAGEVKTKPTQHSVKELLSIGIQPDILICRSDRAVPANERAKIALFCNVPEKAVISMKDVDSIYKIPGLLKSQGLDDYICKRFSLNCPEANLSEWEQVIYEEANPAGEVTIGMVGKYIELPDAYKSVIEALKHGGLKNRVTVNIKLIDSQDVETRGVEILKDLDAILIPGGFGYRGVEGKIATARYARENNIPYLGICLGMQVALIEFARNVAGMDNANSTEFVPDCKYPVVALITEWRDEDGNVEVRSEKSDLGGTMRLGAQQCQLSDDSLVRQLYGASTIVERHRHRYEVNNMLLKQIEAAGLRVAGRSGDDQLVEIIEVPNHPWFVACQFHPEFTSTPRDGHPLFAGFVKAASEHQKRQAK</sequence>
<feature type="chain" id="PRO_1000139565" description="CTP synthase">
    <location>
        <begin position="1"/>
        <end position="545"/>
    </location>
</feature>
<feature type="domain" description="Glutamine amidotransferase type-1" evidence="1">
    <location>
        <begin position="291"/>
        <end position="542"/>
    </location>
</feature>
<feature type="region of interest" description="Amidoligase domain" evidence="1">
    <location>
        <begin position="1"/>
        <end position="266"/>
    </location>
</feature>
<feature type="active site" description="Nucleophile; for glutamine hydrolysis" evidence="1">
    <location>
        <position position="379"/>
    </location>
</feature>
<feature type="active site" evidence="1">
    <location>
        <position position="515"/>
    </location>
</feature>
<feature type="active site" evidence="1">
    <location>
        <position position="517"/>
    </location>
</feature>
<feature type="binding site" evidence="1">
    <location>
        <position position="14"/>
    </location>
    <ligand>
        <name>CTP</name>
        <dbReference type="ChEBI" id="CHEBI:37563"/>
        <note>allosteric inhibitor</note>
    </ligand>
</feature>
<feature type="binding site" evidence="1">
    <location>
        <position position="14"/>
    </location>
    <ligand>
        <name>UTP</name>
        <dbReference type="ChEBI" id="CHEBI:46398"/>
    </ligand>
</feature>
<feature type="binding site" evidence="1">
    <location>
        <begin position="15"/>
        <end position="20"/>
    </location>
    <ligand>
        <name>ATP</name>
        <dbReference type="ChEBI" id="CHEBI:30616"/>
    </ligand>
</feature>
<feature type="binding site" evidence="1">
    <location>
        <position position="72"/>
    </location>
    <ligand>
        <name>ATP</name>
        <dbReference type="ChEBI" id="CHEBI:30616"/>
    </ligand>
</feature>
<feature type="binding site" evidence="1">
    <location>
        <position position="72"/>
    </location>
    <ligand>
        <name>Mg(2+)</name>
        <dbReference type="ChEBI" id="CHEBI:18420"/>
    </ligand>
</feature>
<feature type="binding site" evidence="1">
    <location>
        <position position="140"/>
    </location>
    <ligand>
        <name>Mg(2+)</name>
        <dbReference type="ChEBI" id="CHEBI:18420"/>
    </ligand>
</feature>
<feature type="binding site" evidence="1">
    <location>
        <begin position="147"/>
        <end position="149"/>
    </location>
    <ligand>
        <name>CTP</name>
        <dbReference type="ChEBI" id="CHEBI:37563"/>
        <note>allosteric inhibitor</note>
    </ligand>
</feature>
<feature type="binding site" evidence="1">
    <location>
        <begin position="187"/>
        <end position="192"/>
    </location>
    <ligand>
        <name>CTP</name>
        <dbReference type="ChEBI" id="CHEBI:37563"/>
        <note>allosteric inhibitor</note>
    </ligand>
</feature>
<feature type="binding site" evidence="1">
    <location>
        <begin position="187"/>
        <end position="192"/>
    </location>
    <ligand>
        <name>UTP</name>
        <dbReference type="ChEBI" id="CHEBI:46398"/>
    </ligand>
</feature>
<feature type="binding site" evidence="1">
    <location>
        <position position="223"/>
    </location>
    <ligand>
        <name>CTP</name>
        <dbReference type="ChEBI" id="CHEBI:37563"/>
        <note>allosteric inhibitor</note>
    </ligand>
</feature>
<feature type="binding site" evidence="1">
    <location>
        <position position="223"/>
    </location>
    <ligand>
        <name>UTP</name>
        <dbReference type="ChEBI" id="CHEBI:46398"/>
    </ligand>
</feature>
<feature type="binding site" evidence="1">
    <location>
        <begin position="239"/>
        <end position="241"/>
    </location>
    <ligand>
        <name>ATP</name>
        <dbReference type="ChEBI" id="CHEBI:30616"/>
    </ligand>
</feature>
<feature type="binding site" evidence="1">
    <location>
        <position position="352"/>
    </location>
    <ligand>
        <name>L-glutamine</name>
        <dbReference type="ChEBI" id="CHEBI:58359"/>
    </ligand>
</feature>
<feature type="binding site" evidence="1">
    <location>
        <begin position="380"/>
        <end position="383"/>
    </location>
    <ligand>
        <name>L-glutamine</name>
        <dbReference type="ChEBI" id="CHEBI:58359"/>
    </ligand>
</feature>
<feature type="binding site" evidence="1">
    <location>
        <position position="403"/>
    </location>
    <ligand>
        <name>L-glutamine</name>
        <dbReference type="ChEBI" id="CHEBI:58359"/>
    </ligand>
</feature>
<feature type="binding site" evidence="1">
    <location>
        <position position="470"/>
    </location>
    <ligand>
        <name>L-glutamine</name>
        <dbReference type="ChEBI" id="CHEBI:58359"/>
    </ligand>
</feature>
<dbReference type="EC" id="6.3.4.2" evidence="1"/>
<dbReference type="EMBL" id="CP001127">
    <property type="protein sequence ID" value="ACF91042.1"/>
    <property type="molecule type" value="Genomic_DNA"/>
</dbReference>
<dbReference type="RefSeq" id="WP_000210864.1">
    <property type="nucleotide sequence ID" value="NC_011094.1"/>
</dbReference>
<dbReference type="SMR" id="B4TTY6"/>
<dbReference type="MEROPS" id="C26.964"/>
<dbReference type="KEGG" id="sew:SeSA_A3111"/>
<dbReference type="HOGENOM" id="CLU_011675_5_0_6"/>
<dbReference type="UniPathway" id="UPA00159">
    <property type="reaction ID" value="UER00277"/>
</dbReference>
<dbReference type="Proteomes" id="UP000001865">
    <property type="component" value="Chromosome"/>
</dbReference>
<dbReference type="GO" id="GO:0005829">
    <property type="term" value="C:cytosol"/>
    <property type="evidence" value="ECO:0007669"/>
    <property type="project" value="TreeGrafter"/>
</dbReference>
<dbReference type="GO" id="GO:0005524">
    <property type="term" value="F:ATP binding"/>
    <property type="evidence" value="ECO:0007669"/>
    <property type="project" value="UniProtKB-KW"/>
</dbReference>
<dbReference type="GO" id="GO:0003883">
    <property type="term" value="F:CTP synthase activity"/>
    <property type="evidence" value="ECO:0007669"/>
    <property type="project" value="UniProtKB-UniRule"/>
</dbReference>
<dbReference type="GO" id="GO:0004359">
    <property type="term" value="F:glutaminase activity"/>
    <property type="evidence" value="ECO:0007669"/>
    <property type="project" value="RHEA"/>
</dbReference>
<dbReference type="GO" id="GO:0042802">
    <property type="term" value="F:identical protein binding"/>
    <property type="evidence" value="ECO:0007669"/>
    <property type="project" value="TreeGrafter"/>
</dbReference>
<dbReference type="GO" id="GO:0046872">
    <property type="term" value="F:metal ion binding"/>
    <property type="evidence" value="ECO:0007669"/>
    <property type="project" value="UniProtKB-KW"/>
</dbReference>
<dbReference type="GO" id="GO:0044210">
    <property type="term" value="P:'de novo' CTP biosynthetic process"/>
    <property type="evidence" value="ECO:0007669"/>
    <property type="project" value="UniProtKB-UniRule"/>
</dbReference>
<dbReference type="GO" id="GO:0019856">
    <property type="term" value="P:pyrimidine nucleobase biosynthetic process"/>
    <property type="evidence" value="ECO:0007669"/>
    <property type="project" value="TreeGrafter"/>
</dbReference>
<dbReference type="CDD" id="cd03113">
    <property type="entry name" value="CTPS_N"/>
    <property type="match status" value="1"/>
</dbReference>
<dbReference type="CDD" id="cd01746">
    <property type="entry name" value="GATase1_CTP_Synthase"/>
    <property type="match status" value="1"/>
</dbReference>
<dbReference type="FunFam" id="3.40.50.300:FF:000009">
    <property type="entry name" value="CTP synthase"/>
    <property type="match status" value="1"/>
</dbReference>
<dbReference type="FunFam" id="3.40.50.880:FF:000002">
    <property type="entry name" value="CTP synthase"/>
    <property type="match status" value="1"/>
</dbReference>
<dbReference type="Gene3D" id="3.40.50.880">
    <property type="match status" value="1"/>
</dbReference>
<dbReference type="Gene3D" id="3.40.50.300">
    <property type="entry name" value="P-loop containing nucleotide triphosphate hydrolases"/>
    <property type="match status" value="1"/>
</dbReference>
<dbReference type="HAMAP" id="MF_01227">
    <property type="entry name" value="PyrG"/>
    <property type="match status" value="1"/>
</dbReference>
<dbReference type="InterPro" id="IPR029062">
    <property type="entry name" value="Class_I_gatase-like"/>
</dbReference>
<dbReference type="InterPro" id="IPR004468">
    <property type="entry name" value="CTP_synthase"/>
</dbReference>
<dbReference type="InterPro" id="IPR017456">
    <property type="entry name" value="CTP_synthase_N"/>
</dbReference>
<dbReference type="InterPro" id="IPR017926">
    <property type="entry name" value="GATASE"/>
</dbReference>
<dbReference type="InterPro" id="IPR033828">
    <property type="entry name" value="GATase1_CTP_Synthase"/>
</dbReference>
<dbReference type="InterPro" id="IPR027417">
    <property type="entry name" value="P-loop_NTPase"/>
</dbReference>
<dbReference type="NCBIfam" id="NF003792">
    <property type="entry name" value="PRK05380.1"/>
    <property type="match status" value="1"/>
</dbReference>
<dbReference type="NCBIfam" id="TIGR00337">
    <property type="entry name" value="PyrG"/>
    <property type="match status" value="1"/>
</dbReference>
<dbReference type="PANTHER" id="PTHR11550">
    <property type="entry name" value="CTP SYNTHASE"/>
    <property type="match status" value="1"/>
</dbReference>
<dbReference type="PANTHER" id="PTHR11550:SF0">
    <property type="entry name" value="CTP SYNTHASE-RELATED"/>
    <property type="match status" value="1"/>
</dbReference>
<dbReference type="Pfam" id="PF06418">
    <property type="entry name" value="CTP_synth_N"/>
    <property type="match status" value="1"/>
</dbReference>
<dbReference type="Pfam" id="PF00117">
    <property type="entry name" value="GATase"/>
    <property type="match status" value="1"/>
</dbReference>
<dbReference type="SUPFAM" id="SSF52317">
    <property type="entry name" value="Class I glutamine amidotransferase-like"/>
    <property type="match status" value="1"/>
</dbReference>
<dbReference type="SUPFAM" id="SSF52540">
    <property type="entry name" value="P-loop containing nucleoside triphosphate hydrolases"/>
    <property type="match status" value="1"/>
</dbReference>
<dbReference type="PROSITE" id="PS51273">
    <property type="entry name" value="GATASE_TYPE_1"/>
    <property type="match status" value="1"/>
</dbReference>
<comment type="function">
    <text evidence="1">Catalyzes the ATP-dependent amination of UTP to CTP with either L-glutamine or ammonia as the source of nitrogen. Regulates intracellular CTP levels through interactions with the four ribonucleotide triphosphates.</text>
</comment>
<comment type="catalytic activity">
    <reaction evidence="1">
        <text>UTP + L-glutamine + ATP + H2O = CTP + L-glutamate + ADP + phosphate + 2 H(+)</text>
        <dbReference type="Rhea" id="RHEA:26426"/>
        <dbReference type="ChEBI" id="CHEBI:15377"/>
        <dbReference type="ChEBI" id="CHEBI:15378"/>
        <dbReference type="ChEBI" id="CHEBI:29985"/>
        <dbReference type="ChEBI" id="CHEBI:30616"/>
        <dbReference type="ChEBI" id="CHEBI:37563"/>
        <dbReference type="ChEBI" id="CHEBI:43474"/>
        <dbReference type="ChEBI" id="CHEBI:46398"/>
        <dbReference type="ChEBI" id="CHEBI:58359"/>
        <dbReference type="ChEBI" id="CHEBI:456216"/>
        <dbReference type="EC" id="6.3.4.2"/>
    </reaction>
</comment>
<comment type="catalytic activity">
    <reaction evidence="1">
        <text>L-glutamine + H2O = L-glutamate + NH4(+)</text>
        <dbReference type="Rhea" id="RHEA:15889"/>
        <dbReference type="ChEBI" id="CHEBI:15377"/>
        <dbReference type="ChEBI" id="CHEBI:28938"/>
        <dbReference type="ChEBI" id="CHEBI:29985"/>
        <dbReference type="ChEBI" id="CHEBI:58359"/>
    </reaction>
</comment>
<comment type="catalytic activity">
    <reaction evidence="1">
        <text>UTP + NH4(+) + ATP = CTP + ADP + phosphate + 2 H(+)</text>
        <dbReference type="Rhea" id="RHEA:16597"/>
        <dbReference type="ChEBI" id="CHEBI:15378"/>
        <dbReference type="ChEBI" id="CHEBI:28938"/>
        <dbReference type="ChEBI" id="CHEBI:30616"/>
        <dbReference type="ChEBI" id="CHEBI:37563"/>
        <dbReference type="ChEBI" id="CHEBI:43474"/>
        <dbReference type="ChEBI" id="CHEBI:46398"/>
        <dbReference type="ChEBI" id="CHEBI:456216"/>
    </reaction>
</comment>
<comment type="activity regulation">
    <text evidence="1">Allosterically activated by GTP, when glutamine is the substrate; GTP has no effect on the reaction when ammonia is the substrate. The allosteric effector GTP functions by stabilizing the protein conformation that binds the tetrahedral intermediate(s) formed during glutamine hydrolysis. Inhibited by the product CTP, via allosteric rather than competitive inhibition.</text>
</comment>
<comment type="pathway">
    <text evidence="1">Pyrimidine metabolism; CTP biosynthesis via de novo pathway; CTP from UDP: step 2/2.</text>
</comment>
<comment type="subunit">
    <text evidence="1">Homotetramer.</text>
</comment>
<comment type="miscellaneous">
    <text evidence="1">CTPSs have evolved a hybrid strategy for distinguishing between UTP and CTP. The overlapping regions of the product feedback inhibitory and substrate sites recognize a common feature in both compounds, the triphosphate moiety. To differentiate isosteric substrate and product pyrimidine rings, an additional pocket far from the expected kinase/ligase catalytic site, specifically recognizes the cytosine and ribose portions of the product inhibitor.</text>
</comment>
<comment type="similarity">
    <text evidence="1">Belongs to the CTP synthase family.</text>
</comment>